<feature type="signal peptide" evidence="1">
    <location>
        <begin position="1"/>
        <end position="20"/>
    </location>
</feature>
<feature type="chain" id="PRO_1000132363" description="Ecotin">
    <location>
        <begin position="21"/>
        <end position="162"/>
    </location>
</feature>
<feature type="site" description="Reactive bond" evidence="1">
    <location>
        <begin position="104"/>
        <end position="105"/>
    </location>
</feature>
<feature type="disulfide bond" evidence="1">
    <location>
        <begin position="70"/>
        <end position="107"/>
    </location>
</feature>
<comment type="function">
    <text evidence="1">General inhibitor of pancreatic serine proteases: inhibits chymotrypsin, trypsin, elastases, factor X, kallikrein as well as a variety of other proteases.</text>
</comment>
<comment type="subunit">
    <text evidence="1">Homodimer.</text>
</comment>
<comment type="subcellular location">
    <subcellularLocation>
        <location evidence="1">Periplasm</location>
    </subcellularLocation>
</comment>
<comment type="similarity">
    <text evidence="1">Belongs to the protease inhibitor I11 (ecotin) family.</text>
</comment>
<name>ECOT_ESCF3</name>
<keyword id="KW-1015">Disulfide bond</keyword>
<keyword id="KW-0574">Periplasm</keyword>
<keyword id="KW-0646">Protease inhibitor</keyword>
<keyword id="KW-0722">Serine protease inhibitor</keyword>
<keyword id="KW-0732">Signal</keyword>
<reference key="1">
    <citation type="journal article" date="2009" name="PLoS Genet.">
        <title>Organised genome dynamics in the Escherichia coli species results in highly diverse adaptive paths.</title>
        <authorList>
            <person name="Touchon M."/>
            <person name="Hoede C."/>
            <person name="Tenaillon O."/>
            <person name="Barbe V."/>
            <person name="Baeriswyl S."/>
            <person name="Bidet P."/>
            <person name="Bingen E."/>
            <person name="Bonacorsi S."/>
            <person name="Bouchier C."/>
            <person name="Bouvet O."/>
            <person name="Calteau A."/>
            <person name="Chiapello H."/>
            <person name="Clermont O."/>
            <person name="Cruveiller S."/>
            <person name="Danchin A."/>
            <person name="Diard M."/>
            <person name="Dossat C."/>
            <person name="Karoui M.E."/>
            <person name="Frapy E."/>
            <person name="Garry L."/>
            <person name="Ghigo J.M."/>
            <person name="Gilles A.M."/>
            <person name="Johnson J."/>
            <person name="Le Bouguenec C."/>
            <person name="Lescat M."/>
            <person name="Mangenot S."/>
            <person name="Martinez-Jehanne V."/>
            <person name="Matic I."/>
            <person name="Nassif X."/>
            <person name="Oztas S."/>
            <person name="Petit M.A."/>
            <person name="Pichon C."/>
            <person name="Rouy Z."/>
            <person name="Ruf C.S."/>
            <person name="Schneider D."/>
            <person name="Tourret J."/>
            <person name="Vacherie B."/>
            <person name="Vallenet D."/>
            <person name="Medigue C."/>
            <person name="Rocha E.P.C."/>
            <person name="Denamur E."/>
        </authorList>
    </citation>
    <scope>NUCLEOTIDE SEQUENCE [LARGE SCALE GENOMIC DNA]</scope>
    <source>
        <strain>ATCC 35469 / DSM 13698 / BCRC 15582 / CCUG 18766 / IAM 14443 / JCM 21226 / LMG 7866 / NBRC 102419 / NCTC 12128 / CDC 0568-73</strain>
    </source>
</reference>
<proteinExistence type="inferred from homology"/>
<protein>
    <recommendedName>
        <fullName evidence="1">Ecotin</fullName>
    </recommendedName>
</protein>
<dbReference type="EMBL" id="CU928158">
    <property type="protein sequence ID" value="CAQ89800.1"/>
    <property type="molecule type" value="Genomic_DNA"/>
</dbReference>
<dbReference type="RefSeq" id="WP_000849219.1">
    <property type="nucleotide sequence ID" value="NC_011740.1"/>
</dbReference>
<dbReference type="SMR" id="B7LJV0"/>
<dbReference type="MEROPS" id="I11.001"/>
<dbReference type="GeneID" id="75056671"/>
<dbReference type="KEGG" id="efe:EFER_2299"/>
<dbReference type="HOGENOM" id="CLU_111565_0_0_6"/>
<dbReference type="OrthoDB" id="997196at2"/>
<dbReference type="Proteomes" id="UP000000745">
    <property type="component" value="Chromosome"/>
</dbReference>
<dbReference type="GO" id="GO:0042597">
    <property type="term" value="C:periplasmic space"/>
    <property type="evidence" value="ECO:0007669"/>
    <property type="project" value="UniProtKB-SubCell"/>
</dbReference>
<dbReference type="GO" id="GO:0004867">
    <property type="term" value="F:serine-type endopeptidase inhibitor activity"/>
    <property type="evidence" value="ECO:0007669"/>
    <property type="project" value="UniProtKB-UniRule"/>
</dbReference>
<dbReference type="CDD" id="cd00242">
    <property type="entry name" value="Ecotin"/>
    <property type="match status" value="1"/>
</dbReference>
<dbReference type="FunFam" id="2.60.40.550:FF:000001">
    <property type="entry name" value="Ecotin"/>
    <property type="match status" value="1"/>
</dbReference>
<dbReference type="FunFam" id="4.10.1230.10:FF:000001">
    <property type="entry name" value="Ecotin"/>
    <property type="match status" value="1"/>
</dbReference>
<dbReference type="Gene3D" id="2.60.40.550">
    <property type="entry name" value="Ecotin"/>
    <property type="match status" value="1"/>
</dbReference>
<dbReference type="Gene3D" id="4.10.1230.10">
    <property type="entry name" value="Ecotin, trypsin inhibitor"/>
    <property type="match status" value="1"/>
</dbReference>
<dbReference type="HAMAP" id="MF_00706">
    <property type="entry name" value="Ecotin"/>
    <property type="match status" value="1"/>
</dbReference>
<dbReference type="InterPro" id="IPR027438">
    <property type="entry name" value="Ecotin_C"/>
</dbReference>
<dbReference type="InterPro" id="IPR036198">
    <property type="entry name" value="Ecotin_sf"/>
</dbReference>
<dbReference type="InterPro" id="IPR005658">
    <property type="entry name" value="Prot_inh_ecotin"/>
</dbReference>
<dbReference type="InterPro" id="IPR023084">
    <property type="entry name" value="Prot_inh_ecotin_gammaproteobac"/>
</dbReference>
<dbReference type="NCBIfam" id="NF002987">
    <property type="entry name" value="PRK03719.1"/>
    <property type="match status" value="1"/>
</dbReference>
<dbReference type="PANTHER" id="PTHR35890">
    <property type="match status" value="1"/>
</dbReference>
<dbReference type="PANTHER" id="PTHR35890:SF3">
    <property type="entry name" value="ECOTIN"/>
    <property type="match status" value="1"/>
</dbReference>
<dbReference type="Pfam" id="PF03974">
    <property type="entry name" value="Ecotin"/>
    <property type="match status" value="1"/>
</dbReference>
<dbReference type="PIRSF" id="PIRSF006865">
    <property type="entry name" value="Prot_inh_ecotin"/>
    <property type="match status" value="1"/>
</dbReference>
<dbReference type="SUPFAM" id="SSF49772">
    <property type="entry name" value="Ecotin, trypsin inhibitor"/>
    <property type="match status" value="1"/>
</dbReference>
<gene>
    <name evidence="1" type="primary">eco</name>
    <name type="ordered locus">EFER_2299</name>
</gene>
<sequence>MKTILPAVLFAAFATTSAWAAESVQPLEKIAPYPQAEKGMKRQVIQLTPQKDESTLKVELLIGQTLEVDCNLHRLGGKLESKTLEGWGYDYYVFDKVSSPVSTMMACPDGKKEKKFVTAYLGDAGMLRYNSKLPIVVYTPDNVDVKYRIWKAEEKIDNAVEK</sequence>
<accession>B7LJV0</accession>
<organism>
    <name type="scientific">Escherichia fergusonii (strain ATCC 35469 / DSM 13698 / CCUG 18766 / IAM 14443 / JCM 21226 / LMG 7866 / NBRC 102419 / NCTC 12128 / CDC 0568-73)</name>
    <dbReference type="NCBI Taxonomy" id="585054"/>
    <lineage>
        <taxon>Bacteria</taxon>
        <taxon>Pseudomonadati</taxon>
        <taxon>Pseudomonadota</taxon>
        <taxon>Gammaproteobacteria</taxon>
        <taxon>Enterobacterales</taxon>
        <taxon>Enterobacteriaceae</taxon>
        <taxon>Escherichia</taxon>
    </lineage>
</organism>
<evidence type="ECO:0000255" key="1">
    <source>
        <dbReference type="HAMAP-Rule" id="MF_00706"/>
    </source>
</evidence>